<reference key="1">
    <citation type="submission" date="2005-03" db="EMBL/GenBank/DDBJ databases">
        <title>Annotation of the Saccharomyces cerevisiae RM11-1a genome.</title>
        <authorList>
            <consortium name="The Broad Institute Genome Sequencing Platform"/>
            <person name="Birren B.W."/>
            <person name="Lander E.S."/>
            <person name="Galagan J.E."/>
            <person name="Nusbaum C."/>
            <person name="Devon K."/>
            <person name="Cuomo C."/>
            <person name="Jaffe D.B."/>
            <person name="Butler J."/>
            <person name="Alvarez P."/>
            <person name="Gnerre S."/>
            <person name="Grabherr M."/>
            <person name="Kleber M."/>
            <person name="Mauceli E.W."/>
            <person name="Brockman W."/>
            <person name="MacCallum I.A."/>
            <person name="Rounsley S."/>
            <person name="Young S.K."/>
            <person name="LaButti K."/>
            <person name="Pushparaj V."/>
            <person name="DeCaprio D."/>
            <person name="Crawford M."/>
            <person name="Koehrsen M."/>
            <person name="Engels R."/>
            <person name="Montgomery P."/>
            <person name="Pearson M."/>
            <person name="Howarth C."/>
            <person name="Larson L."/>
            <person name="Luoma S."/>
            <person name="White J."/>
            <person name="O'Leary S."/>
            <person name="Kodira C.D."/>
            <person name="Zeng Q."/>
            <person name="Yandava C."/>
            <person name="Alvarado L."/>
            <person name="Pratt S."/>
            <person name="Kruglyak L."/>
        </authorList>
    </citation>
    <scope>NUCLEOTIDE SEQUENCE [LARGE SCALE GENOMIC DNA]</scope>
    <source>
        <strain>RM11-1a</strain>
    </source>
</reference>
<name>AIM3_YEAS1</name>
<organism>
    <name type="scientific">Saccharomyces cerevisiae (strain RM11-1a)</name>
    <name type="common">Baker's yeast</name>
    <dbReference type="NCBI Taxonomy" id="285006"/>
    <lineage>
        <taxon>Eukaryota</taxon>
        <taxon>Fungi</taxon>
        <taxon>Dikarya</taxon>
        <taxon>Ascomycota</taxon>
        <taxon>Saccharomycotina</taxon>
        <taxon>Saccharomycetes</taxon>
        <taxon>Saccharomycetales</taxon>
        <taxon>Saccharomycetaceae</taxon>
        <taxon>Saccharomyces</taxon>
    </lineage>
</organism>
<proteinExistence type="inferred from homology"/>
<keyword id="KW-0472">Membrane</keyword>
<keyword id="KW-0597">Phosphoprotein</keyword>
<accession>B3LN45</accession>
<protein>
    <recommendedName>
        <fullName>Altered inheritance of mitochondria protein 3</fullName>
    </recommendedName>
</protein>
<sequence length="936" mass="102618">MGFWENNKDSITSGLKSAGKYGYQGTKYVAKTGYKASKKHYNNSKARRERKSGKKNSSDEEYESEDEMEHERKPTDIRSLKDPKSFPPPPLKPGQKTYTGQQQQQMPNGQASYAFQGAYQGQPGAGSMEQSQYAQPQYNQYPQQQLQQGVMPQQPPIYGEQVPPYGSNSNATSYQSLPQQNQPQYAIPSQVSLNSASQQSTGFVSQNLQYGTQSSNPAPSPSFQNGLQCHQQPQYVSHGSTNLGQSQFPSGQQQQPTTQFGQQVLPSPAQPHPQPQQQQQGQPLPPPRGQVILPAPGEPLSNGFGQQQQQPLNQNNALLPQMNVEGVSGMAAVQPVYGQAMSSTTNMQDSNPSYGASPMQGQPPVGGQPPVPVRMQPQPPQPMQQGNIYPIEPSLDSTSSTPHFEVTPFDPDAPAPKPKIDIPTVDVSSLPPPPTHRDRGAVLHQEPAPSGKIQPNTTSSAASLPAKHSRTTTADNERNSGNKENDESTSKSSILGHYDVDVNIMPPPKPFRHGLDSVPSEHTRKNASERAVPILPPRNNVEPPPPPSRGNFERTESVLSTNAANVQEDPISNFLPPPKPFRHTETKQNQNSKASPVEIKDEVLPGHPSEEDRNVEPSLLPQSKSQSQSQSQFRRAHMETQPIQNFQPPPKPFRRSQSSNSSDSSYTIDGPEANHGRGRGRIAKHHDGDEYNPKSENSTENGRLGDAPNSFIRKRAPTPPAPSGSEKLHEGAITSEVDSSKDANKYEKSIPPVTSSIQAQQSTKKAPPPVVKPKPRNFSLKANEYPKELTREATGQDEVLNSITNELSHIKLRKINVNLEKLGGSKKVKDSSPVPSDLDEKYVSASGSITPPRPPPSRSSPKKVPPVVPKKNDNLKKKPPVVPKKKPLLKSLEPRPIEMERAYSGDISAADDNLNPFERYKRNVVPQEDDRLHKLK</sequence>
<evidence type="ECO:0000250" key="1"/>
<evidence type="ECO:0000250" key="2">
    <source>
        <dbReference type="UniProtKB" id="P38266"/>
    </source>
</evidence>
<evidence type="ECO:0000256" key="3">
    <source>
        <dbReference type="SAM" id="MobiDB-lite"/>
    </source>
</evidence>
<evidence type="ECO:0000305" key="4"/>
<dbReference type="EMBL" id="CH408048">
    <property type="protein sequence ID" value="EDV11998.1"/>
    <property type="molecule type" value="Genomic_DNA"/>
</dbReference>
<dbReference type="HOGENOM" id="CLU_324433_0_0_1"/>
<dbReference type="OrthoDB" id="41995at4893"/>
<dbReference type="Proteomes" id="UP000008335">
    <property type="component" value="Unassembled WGS sequence"/>
</dbReference>
<dbReference type="GO" id="GO:0030479">
    <property type="term" value="C:actin cortical patch"/>
    <property type="evidence" value="ECO:0007669"/>
    <property type="project" value="InterPro"/>
</dbReference>
<dbReference type="GO" id="GO:0045121">
    <property type="term" value="C:membrane raft"/>
    <property type="evidence" value="ECO:0007669"/>
    <property type="project" value="UniProtKB-SubCell"/>
</dbReference>
<dbReference type="GO" id="GO:0051016">
    <property type="term" value="P:barbed-end actin filament capping"/>
    <property type="evidence" value="ECO:0007669"/>
    <property type="project" value="InterPro"/>
</dbReference>
<dbReference type="InterPro" id="IPR031370">
    <property type="entry name" value="Aim3"/>
</dbReference>
<dbReference type="Pfam" id="PF17096">
    <property type="entry name" value="AIM3"/>
    <property type="match status" value="1"/>
</dbReference>
<gene>
    <name type="primary">AIM3</name>
    <name type="ORF">SCRG_02858</name>
</gene>
<comment type="subunit">
    <text evidence="1">Interacts with RVS167.</text>
</comment>
<comment type="subcellular location">
    <subcellularLocation>
        <location evidence="1">Membrane raft</location>
        <topology evidence="1">Peripheral membrane protein</topology>
    </subcellularLocation>
    <text evidence="1">Localizes within detergent-insoluble glycolipid-enriched membranes.</text>
</comment>
<comment type="similarity">
    <text evidence="4">Belongs to the AIM3 family.</text>
</comment>
<feature type="chain" id="PRO_0000399605" description="Altered inheritance of mitochondria protein 3">
    <location>
        <begin position="1"/>
        <end position="936"/>
    </location>
</feature>
<feature type="region of interest" description="Disordered" evidence="3">
    <location>
        <begin position="1"/>
        <end position="315"/>
    </location>
</feature>
<feature type="region of interest" description="Disordered" evidence="3">
    <location>
        <begin position="341"/>
        <end position="795"/>
    </location>
</feature>
<feature type="region of interest" description="Disordered" evidence="3">
    <location>
        <begin position="818"/>
        <end position="893"/>
    </location>
</feature>
<feature type="region of interest" description="Disordered" evidence="3">
    <location>
        <begin position="908"/>
        <end position="936"/>
    </location>
</feature>
<feature type="compositionally biased region" description="Basic residues" evidence="3">
    <location>
        <begin position="36"/>
        <end position="54"/>
    </location>
</feature>
<feature type="compositionally biased region" description="Acidic residues" evidence="3">
    <location>
        <begin position="59"/>
        <end position="68"/>
    </location>
</feature>
<feature type="compositionally biased region" description="Basic and acidic residues" evidence="3">
    <location>
        <begin position="69"/>
        <end position="84"/>
    </location>
</feature>
<feature type="compositionally biased region" description="Low complexity" evidence="3">
    <location>
        <begin position="93"/>
        <end position="105"/>
    </location>
</feature>
<feature type="compositionally biased region" description="Low complexity" evidence="3">
    <location>
        <begin position="130"/>
        <end position="152"/>
    </location>
</feature>
<feature type="compositionally biased region" description="Polar residues" evidence="3">
    <location>
        <begin position="166"/>
        <end position="244"/>
    </location>
</feature>
<feature type="compositionally biased region" description="Low complexity" evidence="3">
    <location>
        <begin position="245"/>
        <end position="267"/>
    </location>
</feature>
<feature type="compositionally biased region" description="Low complexity" evidence="3">
    <location>
        <begin position="306"/>
        <end position="315"/>
    </location>
</feature>
<feature type="compositionally biased region" description="Polar residues" evidence="3">
    <location>
        <begin position="341"/>
        <end position="354"/>
    </location>
</feature>
<feature type="compositionally biased region" description="Pro residues" evidence="3">
    <location>
        <begin position="366"/>
        <end position="382"/>
    </location>
</feature>
<feature type="compositionally biased region" description="Polar residues" evidence="3">
    <location>
        <begin position="453"/>
        <end position="462"/>
    </location>
</feature>
<feature type="compositionally biased region" description="Basic and acidic residues" evidence="3">
    <location>
        <begin position="475"/>
        <end position="489"/>
    </location>
</feature>
<feature type="compositionally biased region" description="Basic and acidic residues" evidence="3">
    <location>
        <begin position="513"/>
        <end position="528"/>
    </location>
</feature>
<feature type="compositionally biased region" description="Basic and acidic residues" evidence="3">
    <location>
        <begin position="598"/>
        <end position="615"/>
    </location>
</feature>
<feature type="compositionally biased region" description="Low complexity" evidence="3">
    <location>
        <begin position="622"/>
        <end position="632"/>
    </location>
</feature>
<feature type="compositionally biased region" description="Low complexity" evidence="3">
    <location>
        <begin position="656"/>
        <end position="665"/>
    </location>
</feature>
<feature type="compositionally biased region" description="Basic and acidic residues" evidence="3">
    <location>
        <begin position="738"/>
        <end position="748"/>
    </location>
</feature>
<feature type="compositionally biased region" description="Polar residues" evidence="3">
    <location>
        <begin position="752"/>
        <end position="763"/>
    </location>
</feature>
<feature type="compositionally biased region" description="Pro residues" evidence="3">
    <location>
        <begin position="851"/>
        <end position="868"/>
    </location>
</feature>
<feature type="compositionally biased region" description="Basic residues" evidence="3">
    <location>
        <begin position="877"/>
        <end position="888"/>
    </location>
</feature>
<feature type="modified residue" description="Phosphoserine" evidence="2">
    <location>
        <position position="57"/>
    </location>
</feature>
<feature type="modified residue" description="Phosphoserine" evidence="2">
    <location>
        <position position="58"/>
    </location>
</feature>
<feature type="modified residue" description="Phosphoserine" evidence="2">
    <location>
        <position position="64"/>
    </location>
</feature>
<feature type="modified residue" description="Phosphoserine" evidence="2">
    <location>
        <position position="463"/>
    </location>
</feature>
<feature type="modified residue" description="Phosphothreonine" evidence="2">
    <location>
        <position position="718"/>
    </location>
</feature>
<feature type="modified residue" description="Phosphothreonine" evidence="2">
    <location>
        <position position="850"/>
    </location>
</feature>